<protein>
    <recommendedName>
        <fullName evidence="1">Argininosuccinate lyase</fullName>
        <shortName evidence="1">ASAL</shortName>
        <ecNumber evidence="1">4.3.2.1</ecNumber>
    </recommendedName>
    <alternativeName>
        <fullName evidence="1">Arginosuccinase</fullName>
    </alternativeName>
</protein>
<sequence>MTSQLHKKGEAWSARFSEPMSELVKRYTSSVFFDKRLALVDIEGSLAHASMLAAQKIIAADDLTAIQRGMAQIKGEIERGEFEWQLDLEDVHLNIEARLTALIGDAGKRLHTGRSRNDQVATDIRLWLRGEIDRIGGLLTELRTALLDMAEKNAATIMPGFTHLQVAQPVTFGHHLLAYVEMFSRDAERMIDCRKRVNRLPLGAAALAGTSYPIDRYAVAKTLGFDGICANSLDAVSDRDFAIEFTAASALVMTHISRFSEELVLWMSPRVGFIDLADRFCTGSSIMPQKKNPDVPELARGKTGRVNGHLIALLTLMKGQPLAYNKDNQEDKEPLFDTVDTVADTLRIFAEMVAGISVKPQAMRDAALQGFSTATDLADYLVKRGLPFRDAHEAVALAVRVCADRGCDLADLTLEEMRKELSNVAHLIGEDVFSYLTLEGSVASRNHPGGTAPEQVLAAVKAAREALK</sequence>
<accession>Q143B9</accession>
<evidence type="ECO:0000255" key="1">
    <source>
        <dbReference type="HAMAP-Rule" id="MF_00006"/>
    </source>
</evidence>
<organism>
    <name type="scientific">Paraburkholderia xenovorans (strain LB400)</name>
    <dbReference type="NCBI Taxonomy" id="266265"/>
    <lineage>
        <taxon>Bacteria</taxon>
        <taxon>Pseudomonadati</taxon>
        <taxon>Pseudomonadota</taxon>
        <taxon>Betaproteobacteria</taxon>
        <taxon>Burkholderiales</taxon>
        <taxon>Burkholderiaceae</taxon>
        <taxon>Paraburkholderia</taxon>
    </lineage>
</organism>
<keyword id="KW-0028">Amino-acid biosynthesis</keyword>
<keyword id="KW-0055">Arginine biosynthesis</keyword>
<keyword id="KW-0963">Cytoplasm</keyword>
<keyword id="KW-0456">Lyase</keyword>
<keyword id="KW-1185">Reference proteome</keyword>
<name>ARLY_PARXL</name>
<proteinExistence type="inferred from homology"/>
<dbReference type="EC" id="4.3.2.1" evidence="1"/>
<dbReference type="EMBL" id="CP000270">
    <property type="protein sequence ID" value="ABE29570.1"/>
    <property type="molecule type" value="Genomic_DNA"/>
</dbReference>
<dbReference type="RefSeq" id="WP_011487313.1">
    <property type="nucleotide sequence ID" value="NC_007951.1"/>
</dbReference>
<dbReference type="SMR" id="Q143B9"/>
<dbReference type="STRING" id="266265.Bxe_A3415"/>
<dbReference type="KEGG" id="bxb:DR64_1115"/>
<dbReference type="KEGG" id="bxe:Bxe_A3415"/>
<dbReference type="PATRIC" id="fig|266265.5.peg.1059"/>
<dbReference type="eggNOG" id="COG0165">
    <property type="taxonomic scope" value="Bacteria"/>
</dbReference>
<dbReference type="OrthoDB" id="9769623at2"/>
<dbReference type="UniPathway" id="UPA00068">
    <property type="reaction ID" value="UER00114"/>
</dbReference>
<dbReference type="Proteomes" id="UP000001817">
    <property type="component" value="Chromosome 1"/>
</dbReference>
<dbReference type="GO" id="GO:0005829">
    <property type="term" value="C:cytosol"/>
    <property type="evidence" value="ECO:0007669"/>
    <property type="project" value="TreeGrafter"/>
</dbReference>
<dbReference type="GO" id="GO:0004056">
    <property type="term" value="F:argininosuccinate lyase activity"/>
    <property type="evidence" value="ECO:0007669"/>
    <property type="project" value="UniProtKB-UniRule"/>
</dbReference>
<dbReference type="GO" id="GO:0042450">
    <property type="term" value="P:arginine biosynthetic process via ornithine"/>
    <property type="evidence" value="ECO:0007669"/>
    <property type="project" value="InterPro"/>
</dbReference>
<dbReference type="GO" id="GO:0006526">
    <property type="term" value="P:L-arginine biosynthetic process"/>
    <property type="evidence" value="ECO:0007669"/>
    <property type="project" value="UniProtKB-UniRule"/>
</dbReference>
<dbReference type="CDD" id="cd01359">
    <property type="entry name" value="Argininosuccinate_lyase"/>
    <property type="match status" value="1"/>
</dbReference>
<dbReference type="FunFam" id="1.10.275.10:FF:000002">
    <property type="entry name" value="Argininosuccinate lyase"/>
    <property type="match status" value="1"/>
</dbReference>
<dbReference type="FunFam" id="1.10.40.30:FF:000001">
    <property type="entry name" value="Argininosuccinate lyase"/>
    <property type="match status" value="1"/>
</dbReference>
<dbReference type="FunFam" id="1.20.200.10:FF:000015">
    <property type="entry name" value="argininosuccinate lyase isoform X2"/>
    <property type="match status" value="1"/>
</dbReference>
<dbReference type="Gene3D" id="1.10.40.30">
    <property type="entry name" value="Fumarase/aspartase (C-terminal domain)"/>
    <property type="match status" value="1"/>
</dbReference>
<dbReference type="Gene3D" id="1.20.200.10">
    <property type="entry name" value="Fumarase/aspartase (Central domain)"/>
    <property type="match status" value="1"/>
</dbReference>
<dbReference type="Gene3D" id="1.10.275.10">
    <property type="entry name" value="Fumarase/aspartase (N-terminal domain)"/>
    <property type="match status" value="1"/>
</dbReference>
<dbReference type="HAMAP" id="MF_00006">
    <property type="entry name" value="Arg_succ_lyase"/>
    <property type="match status" value="1"/>
</dbReference>
<dbReference type="InterPro" id="IPR029419">
    <property type="entry name" value="Arg_succ_lyase_C"/>
</dbReference>
<dbReference type="InterPro" id="IPR009049">
    <property type="entry name" value="Argininosuccinate_lyase"/>
</dbReference>
<dbReference type="InterPro" id="IPR024083">
    <property type="entry name" value="Fumarase/histidase_N"/>
</dbReference>
<dbReference type="InterPro" id="IPR020557">
    <property type="entry name" value="Fumarate_lyase_CS"/>
</dbReference>
<dbReference type="InterPro" id="IPR000362">
    <property type="entry name" value="Fumarate_lyase_fam"/>
</dbReference>
<dbReference type="InterPro" id="IPR022761">
    <property type="entry name" value="Fumarate_lyase_N"/>
</dbReference>
<dbReference type="InterPro" id="IPR008948">
    <property type="entry name" value="L-Aspartase-like"/>
</dbReference>
<dbReference type="NCBIfam" id="TIGR00838">
    <property type="entry name" value="argH"/>
    <property type="match status" value="1"/>
</dbReference>
<dbReference type="PANTHER" id="PTHR43814">
    <property type="entry name" value="ARGININOSUCCINATE LYASE"/>
    <property type="match status" value="1"/>
</dbReference>
<dbReference type="PANTHER" id="PTHR43814:SF1">
    <property type="entry name" value="ARGININOSUCCINATE LYASE"/>
    <property type="match status" value="1"/>
</dbReference>
<dbReference type="Pfam" id="PF14698">
    <property type="entry name" value="ASL_C2"/>
    <property type="match status" value="1"/>
</dbReference>
<dbReference type="Pfam" id="PF00206">
    <property type="entry name" value="Lyase_1"/>
    <property type="match status" value="1"/>
</dbReference>
<dbReference type="PRINTS" id="PR00145">
    <property type="entry name" value="ARGSUCLYASE"/>
</dbReference>
<dbReference type="PRINTS" id="PR00149">
    <property type="entry name" value="FUMRATELYASE"/>
</dbReference>
<dbReference type="SUPFAM" id="SSF48557">
    <property type="entry name" value="L-aspartase-like"/>
    <property type="match status" value="1"/>
</dbReference>
<dbReference type="PROSITE" id="PS00163">
    <property type="entry name" value="FUMARATE_LYASES"/>
    <property type="match status" value="1"/>
</dbReference>
<gene>
    <name evidence="1" type="primary">argH</name>
    <name type="ordered locus">Bxeno_A1032</name>
    <name type="ORF">Bxe_A3415</name>
</gene>
<feature type="chain" id="PRO_1000000462" description="Argininosuccinate lyase">
    <location>
        <begin position="1"/>
        <end position="468"/>
    </location>
</feature>
<comment type="catalytic activity">
    <reaction evidence="1">
        <text>2-(N(omega)-L-arginino)succinate = fumarate + L-arginine</text>
        <dbReference type="Rhea" id="RHEA:24020"/>
        <dbReference type="ChEBI" id="CHEBI:29806"/>
        <dbReference type="ChEBI" id="CHEBI:32682"/>
        <dbReference type="ChEBI" id="CHEBI:57472"/>
        <dbReference type="EC" id="4.3.2.1"/>
    </reaction>
</comment>
<comment type="pathway">
    <text evidence="1">Amino-acid biosynthesis; L-arginine biosynthesis; L-arginine from L-ornithine and carbamoyl phosphate: step 3/3.</text>
</comment>
<comment type="subcellular location">
    <subcellularLocation>
        <location evidence="1">Cytoplasm</location>
    </subcellularLocation>
</comment>
<comment type="similarity">
    <text evidence="1">Belongs to the lyase 1 family. Argininosuccinate lyase subfamily.</text>
</comment>
<reference key="1">
    <citation type="journal article" date="2006" name="Proc. Natl. Acad. Sci. U.S.A.">
        <title>Burkholderia xenovorans LB400 harbors a multi-replicon, 9.73-Mbp genome shaped for versatility.</title>
        <authorList>
            <person name="Chain P.S.G."/>
            <person name="Denef V.J."/>
            <person name="Konstantinidis K.T."/>
            <person name="Vergez L.M."/>
            <person name="Agullo L."/>
            <person name="Reyes V.L."/>
            <person name="Hauser L."/>
            <person name="Cordova M."/>
            <person name="Gomez L."/>
            <person name="Gonzalez M."/>
            <person name="Land M."/>
            <person name="Lao V."/>
            <person name="Larimer F."/>
            <person name="LiPuma J.J."/>
            <person name="Mahenthiralingam E."/>
            <person name="Malfatti S.A."/>
            <person name="Marx C.J."/>
            <person name="Parnell J.J."/>
            <person name="Ramette A."/>
            <person name="Richardson P."/>
            <person name="Seeger M."/>
            <person name="Smith D."/>
            <person name="Spilker T."/>
            <person name="Sul W.J."/>
            <person name="Tsoi T.V."/>
            <person name="Ulrich L.E."/>
            <person name="Zhulin I.B."/>
            <person name="Tiedje J.M."/>
        </authorList>
    </citation>
    <scope>NUCLEOTIDE SEQUENCE [LARGE SCALE GENOMIC DNA]</scope>
    <source>
        <strain>LB400</strain>
    </source>
</reference>